<sequence length="256" mass="28533">MNNIWWQTKGQGNVHLVLLHGWGLNAEVWRCIDEELSSHFTLHLVDLPGFGRSRGFGALSLADMAEAVLQQAPDKAIWLGWSLGGLVASQIALTHPERVQALVTVASSPCFSARDEWPGIKPDVLAGFQQQLSDDFQRTVERFLALQTMGTETARQDARALKKTVLALPMPEVDVLNGGLEILKTVDLRQPLQNVSMPFLRLYGYLDGLVPRKVVPMLDKLWPHSESYIFAKAAHAPFISHPVEFCHLLVALKQRV</sequence>
<proteinExistence type="inferred from homology"/>
<gene>
    <name evidence="2" type="primary">bioH</name>
    <name type="ordered locus">EcHS_A3609</name>
</gene>
<organism>
    <name type="scientific">Escherichia coli O9:H4 (strain HS)</name>
    <dbReference type="NCBI Taxonomy" id="331112"/>
    <lineage>
        <taxon>Bacteria</taxon>
        <taxon>Pseudomonadati</taxon>
        <taxon>Pseudomonadota</taxon>
        <taxon>Gammaproteobacteria</taxon>
        <taxon>Enterobacterales</taxon>
        <taxon>Enterobacteriaceae</taxon>
        <taxon>Escherichia</taxon>
    </lineage>
</organism>
<protein>
    <recommendedName>
        <fullName evidence="2">Pimeloyl-[acyl-carrier protein] methyl ester esterase</fullName>
        <ecNumber evidence="2">3.1.1.85</ecNumber>
    </recommendedName>
    <alternativeName>
        <fullName evidence="2">Biotin synthesis protein BioH</fullName>
    </alternativeName>
    <alternativeName>
        <fullName evidence="2">Carboxylesterase BioH</fullName>
    </alternativeName>
</protein>
<comment type="function">
    <text evidence="2">The physiological role of BioH is to remove the methyl group introduced by BioC when the pimeloyl moiety is complete. It allows to synthesize pimeloyl-ACP via the fatty acid synthetic pathway through the hydrolysis of the ester bonds of pimeloyl-ACP esters.</text>
</comment>
<comment type="catalytic activity">
    <reaction evidence="2">
        <text>6-carboxyhexanoyl-[ACP] methyl ester + H2O = 6-carboxyhexanoyl-[ACP] + methanol + H(+)</text>
        <dbReference type="Rhea" id="RHEA:42700"/>
        <dbReference type="Rhea" id="RHEA-COMP:9955"/>
        <dbReference type="Rhea" id="RHEA-COMP:10186"/>
        <dbReference type="ChEBI" id="CHEBI:15377"/>
        <dbReference type="ChEBI" id="CHEBI:15378"/>
        <dbReference type="ChEBI" id="CHEBI:17790"/>
        <dbReference type="ChEBI" id="CHEBI:78846"/>
        <dbReference type="ChEBI" id="CHEBI:82735"/>
        <dbReference type="EC" id="3.1.1.85"/>
    </reaction>
</comment>
<comment type="pathway">
    <text evidence="2">Cofactor biosynthesis; biotin biosynthesis.</text>
</comment>
<comment type="subunit">
    <text evidence="2">Monomer.</text>
</comment>
<comment type="subcellular location">
    <subcellularLocation>
        <location evidence="2">Cytoplasm</location>
    </subcellularLocation>
</comment>
<comment type="similarity">
    <text evidence="2">Belongs to the AB hydrolase superfamily. Carboxylesterase BioH family.</text>
</comment>
<accession>A8A5M0</accession>
<reference key="1">
    <citation type="journal article" date="2008" name="J. Bacteriol.">
        <title>The pangenome structure of Escherichia coli: comparative genomic analysis of E. coli commensal and pathogenic isolates.</title>
        <authorList>
            <person name="Rasko D.A."/>
            <person name="Rosovitz M.J."/>
            <person name="Myers G.S.A."/>
            <person name="Mongodin E.F."/>
            <person name="Fricke W.F."/>
            <person name="Gajer P."/>
            <person name="Crabtree J."/>
            <person name="Sebaihia M."/>
            <person name="Thomson N.R."/>
            <person name="Chaudhuri R."/>
            <person name="Henderson I.R."/>
            <person name="Sperandio V."/>
            <person name="Ravel J."/>
        </authorList>
    </citation>
    <scope>NUCLEOTIDE SEQUENCE [LARGE SCALE GENOMIC DNA]</scope>
    <source>
        <strain>HS</strain>
    </source>
</reference>
<keyword id="KW-0093">Biotin biosynthesis</keyword>
<keyword id="KW-0963">Cytoplasm</keyword>
<keyword id="KW-0378">Hydrolase</keyword>
<keyword id="KW-0719">Serine esterase</keyword>
<name>BIOH_ECOHS</name>
<evidence type="ECO:0000255" key="1"/>
<evidence type="ECO:0000255" key="2">
    <source>
        <dbReference type="HAMAP-Rule" id="MF_01260"/>
    </source>
</evidence>
<feature type="chain" id="PRO_1000067265" description="Pimeloyl-[acyl-carrier protein] methyl ester esterase">
    <location>
        <begin position="1"/>
        <end position="256"/>
    </location>
</feature>
<feature type="domain" description="AB hydrolase-1" evidence="1">
    <location>
        <begin position="15"/>
        <end position="242"/>
    </location>
</feature>
<feature type="active site" description="Nucleophile" evidence="2">
    <location>
        <position position="82"/>
    </location>
</feature>
<feature type="active site" evidence="2">
    <location>
        <position position="207"/>
    </location>
</feature>
<feature type="active site" evidence="2">
    <location>
        <position position="235"/>
    </location>
</feature>
<feature type="binding site" evidence="2">
    <location>
        <position position="22"/>
    </location>
    <ligand>
        <name>substrate</name>
    </ligand>
</feature>
<feature type="binding site" evidence="2">
    <location>
        <begin position="82"/>
        <end position="83"/>
    </location>
    <ligand>
        <name>substrate</name>
    </ligand>
</feature>
<feature type="binding site" evidence="2">
    <location>
        <begin position="143"/>
        <end position="147"/>
    </location>
    <ligand>
        <name>substrate</name>
    </ligand>
</feature>
<feature type="binding site" evidence="2">
    <location>
        <position position="235"/>
    </location>
    <ligand>
        <name>substrate</name>
    </ligand>
</feature>
<dbReference type="EC" id="3.1.1.85" evidence="2"/>
<dbReference type="EMBL" id="CP000802">
    <property type="protein sequence ID" value="ABV07824.1"/>
    <property type="molecule type" value="Genomic_DNA"/>
</dbReference>
<dbReference type="RefSeq" id="WP_001060071.1">
    <property type="nucleotide sequence ID" value="NC_009800.1"/>
</dbReference>
<dbReference type="SMR" id="A8A5M0"/>
<dbReference type="ESTHER" id="ecoli-bioh">
    <property type="family name" value="BioH"/>
</dbReference>
<dbReference type="MEROPS" id="S33.994"/>
<dbReference type="GeneID" id="75202255"/>
<dbReference type="KEGG" id="ecx:EcHS_A3609"/>
<dbReference type="HOGENOM" id="CLU_020336_12_2_6"/>
<dbReference type="UniPathway" id="UPA00078"/>
<dbReference type="GO" id="GO:0005737">
    <property type="term" value="C:cytoplasm"/>
    <property type="evidence" value="ECO:0007669"/>
    <property type="project" value="UniProtKB-SubCell"/>
</dbReference>
<dbReference type="GO" id="GO:0090499">
    <property type="term" value="F:pimelyl-[acyl-carrier protein] methyl ester esterase activity"/>
    <property type="evidence" value="ECO:0007669"/>
    <property type="project" value="UniProtKB-EC"/>
</dbReference>
<dbReference type="GO" id="GO:0009102">
    <property type="term" value="P:biotin biosynthetic process"/>
    <property type="evidence" value="ECO:0007669"/>
    <property type="project" value="UniProtKB-UniRule"/>
</dbReference>
<dbReference type="FunFam" id="3.40.50.1820:FF:000045">
    <property type="entry name" value="Pimeloyl-[acyl-carrier protein] methyl ester esterase"/>
    <property type="match status" value="1"/>
</dbReference>
<dbReference type="Gene3D" id="3.40.50.1820">
    <property type="entry name" value="alpha/beta hydrolase"/>
    <property type="match status" value="1"/>
</dbReference>
<dbReference type="HAMAP" id="MF_01260">
    <property type="entry name" value="Carboxylester"/>
    <property type="match status" value="1"/>
</dbReference>
<dbReference type="InterPro" id="IPR000073">
    <property type="entry name" value="AB_hydrolase_1"/>
</dbReference>
<dbReference type="InterPro" id="IPR029058">
    <property type="entry name" value="AB_hydrolase_fold"/>
</dbReference>
<dbReference type="InterPro" id="IPR010076">
    <property type="entry name" value="BioH"/>
</dbReference>
<dbReference type="InterPro" id="IPR050228">
    <property type="entry name" value="Carboxylesterase_BioH"/>
</dbReference>
<dbReference type="NCBIfam" id="TIGR01738">
    <property type="entry name" value="bioH"/>
    <property type="match status" value="1"/>
</dbReference>
<dbReference type="NCBIfam" id="NF007674">
    <property type="entry name" value="PRK10349.1"/>
    <property type="match status" value="1"/>
</dbReference>
<dbReference type="PANTHER" id="PTHR43194">
    <property type="entry name" value="HYDROLASE ALPHA/BETA FOLD FAMILY"/>
    <property type="match status" value="1"/>
</dbReference>
<dbReference type="PANTHER" id="PTHR43194:SF5">
    <property type="entry name" value="PIMELOYL-[ACYL-CARRIER PROTEIN] METHYL ESTER ESTERASE"/>
    <property type="match status" value="1"/>
</dbReference>
<dbReference type="Pfam" id="PF00561">
    <property type="entry name" value="Abhydrolase_1"/>
    <property type="match status" value="1"/>
</dbReference>
<dbReference type="SUPFAM" id="SSF53474">
    <property type="entry name" value="alpha/beta-Hydrolases"/>
    <property type="match status" value="1"/>
</dbReference>